<evidence type="ECO:0000255" key="1">
    <source>
        <dbReference type="HAMAP-Rule" id="MF_01399"/>
    </source>
</evidence>
<reference key="1">
    <citation type="journal article" date="1999" name="J. Phycol.">
        <title>The atpA gene cluster of a cryptomonad, Guillardia theta: a piece in the puzzle of chloroplast genome development.</title>
        <authorList>
            <person name="Leitsch C.E.W."/>
            <person name="Kowallik K.V."/>
            <person name="Douglas S.E."/>
        </authorList>
    </citation>
    <scope>NUCLEOTIDE SEQUENCE [GENOMIC DNA]</scope>
</reference>
<reference key="2">
    <citation type="journal article" date="1999" name="J. Mol. Evol.">
        <title>The plastid genome of the cryptophyte alga, Guillardia theta: complete sequence and conserved synteny groups confirm its common ancestry with red algae.</title>
        <authorList>
            <person name="Douglas S.E."/>
            <person name="Penny S.L."/>
        </authorList>
    </citation>
    <scope>NUCLEOTIDE SEQUENCE [LARGE SCALE GENOMIC DNA]</scope>
</reference>
<keyword id="KW-0066">ATP synthesis</keyword>
<keyword id="KW-0067">ATP-binding</keyword>
<keyword id="KW-0138">CF(0)</keyword>
<keyword id="KW-0150">Chloroplast</keyword>
<keyword id="KW-0375">Hydrogen ion transport</keyword>
<keyword id="KW-0406">Ion transport</keyword>
<keyword id="KW-0472">Membrane</keyword>
<keyword id="KW-0547">Nucleotide-binding</keyword>
<keyword id="KW-0934">Plastid</keyword>
<keyword id="KW-0793">Thylakoid</keyword>
<keyword id="KW-0812">Transmembrane</keyword>
<keyword id="KW-1133">Transmembrane helix</keyword>
<keyword id="KW-0813">Transport</keyword>
<sequence>MTNYLYILALQIAEAESEGGLFDFNATLPLMAVQILLFMVILNAVFYNPVAKVLDEREEYIRKNLTQASDILAKAEAITKQYEKDLAQERREAQLIISVAQKEAQDIVALEIKQAQKDTELLVNEATSQLNSQKQKALSALEDQVNTLTEQIKSKLLSNQLIS</sequence>
<comment type="function">
    <text evidence="1">F(1)F(0) ATP synthase produces ATP from ADP in the presence of a proton or sodium gradient. F-type ATPases consist of two structural domains, F(1) containing the extramembraneous catalytic core and F(0) containing the membrane proton channel, linked together by a central stalk and a peripheral stalk. During catalysis, ATP synthesis in the catalytic domain of F(1) is coupled via a rotary mechanism of the central stalk subunits to proton translocation.</text>
</comment>
<comment type="function">
    <text evidence="1">Component of the F(0) channel, it forms part of the peripheral stalk, linking F(1) to F(0). The b'-subunit is a diverged and duplicated form of b found in plants and photosynthetic bacteria.</text>
</comment>
<comment type="subunit">
    <text evidence="1">F-type ATPases have 2 components, F(1) - the catalytic core - and F(0) - the membrane proton channel. F(1) has five subunits: alpha(3), beta(3), gamma(1), delta(1), epsilon(1). F(0) has four main subunits: a(1), b(1), b'(1) and c(10-14). The alpha and beta chains form an alternating ring which encloses part of the gamma chain. F(1) is attached to F(0) by a central stalk formed by the gamma and epsilon chains, while a peripheral stalk is formed by the delta, b and b' chains.</text>
</comment>
<comment type="subcellular location">
    <subcellularLocation>
        <location evidence="1">Plastid</location>
        <location evidence="1">Chloroplast thylakoid membrane</location>
        <topology evidence="1">Single-pass membrane protein</topology>
    </subcellularLocation>
</comment>
<comment type="miscellaneous">
    <text>In plastids the F-type ATPase is also known as CF(1)CF(0).</text>
</comment>
<comment type="similarity">
    <text evidence="1">Belongs to the ATPase B chain family.</text>
</comment>
<accession>O78478</accession>
<gene>
    <name evidence="1" type="primary">atpF2</name>
    <name evidence="1" type="synonym">atpG</name>
</gene>
<geneLocation type="chloroplast"/>
<proteinExistence type="inferred from homology"/>
<feature type="chain" id="PRO_0000082435" description="ATP synthase subunit b', chloroplastic">
    <location>
        <begin position="1"/>
        <end position="163"/>
    </location>
</feature>
<feature type="transmembrane region" description="Helical" evidence="1">
    <location>
        <begin position="26"/>
        <end position="46"/>
    </location>
</feature>
<organism>
    <name type="scientific">Guillardia theta</name>
    <name type="common">Cryptophyte</name>
    <name type="synonym">Cryptomonas phi</name>
    <dbReference type="NCBI Taxonomy" id="55529"/>
    <lineage>
        <taxon>Eukaryota</taxon>
        <taxon>Cryptophyceae</taxon>
        <taxon>Pyrenomonadales</taxon>
        <taxon>Geminigeraceae</taxon>
        <taxon>Guillardia</taxon>
    </lineage>
</organism>
<name>ATPF2_GUITH</name>
<dbReference type="EMBL" id="AF041468">
    <property type="protein sequence ID" value="AAC35669.1"/>
    <property type="molecule type" value="Genomic_DNA"/>
</dbReference>
<dbReference type="RefSeq" id="NP_050735.1">
    <property type="nucleotide sequence ID" value="NC_000926.1"/>
</dbReference>
<dbReference type="SMR" id="O78478"/>
<dbReference type="GeneID" id="857040"/>
<dbReference type="HOGENOM" id="CLU_079215_9_0_1"/>
<dbReference type="OMA" id="HALMATP"/>
<dbReference type="GO" id="GO:0009535">
    <property type="term" value="C:chloroplast thylakoid membrane"/>
    <property type="evidence" value="ECO:0007669"/>
    <property type="project" value="UniProtKB-SubCell"/>
</dbReference>
<dbReference type="GO" id="GO:0045259">
    <property type="term" value="C:proton-transporting ATP synthase complex"/>
    <property type="evidence" value="ECO:0007669"/>
    <property type="project" value="UniProtKB-KW"/>
</dbReference>
<dbReference type="GO" id="GO:0005524">
    <property type="term" value="F:ATP binding"/>
    <property type="evidence" value="ECO:0007669"/>
    <property type="project" value="UniProtKB-KW"/>
</dbReference>
<dbReference type="GO" id="GO:0046933">
    <property type="term" value="F:proton-transporting ATP synthase activity, rotational mechanism"/>
    <property type="evidence" value="ECO:0007669"/>
    <property type="project" value="UniProtKB-UniRule"/>
</dbReference>
<dbReference type="GO" id="GO:0046961">
    <property type="term" value="F:proton-transporting ATPase activity, rotational mechanism"/>
    <property type="evidence" value="ECO:0007669"/>
    <property type="project" value="TreeGrafter"/>
</dbReference>
<dbReference type="CDD" id="cd06503">
    <property type="entry name" value="ATP-synt_Fo_b"/>
    <property type="match status" value="1"/>
</dbReference>
<dbReference type="HAMAP" id="MF_01398">
    <property type="entry name" value="ATP_synth_b_bprime"/>
    <property type="match status" value="1"/>
</dbReference>
<dbReference type="HAMAP" id="MF_01399">
    <property type="entry name" value="ATP_synth_bprime"/>
    <property type="match status" value="1"/>
</dbReference>
<dbReference type="InterPro" id="IPR034679">
    <property type="entry name" value="ATP_synth_b"/>
</dbReference>
<dbReference type="InterPro" id="IPR002146">
    <property type="entry name" value="ATP_synth_b/b'su_bac/chlpt"/>
</dbReference>
<dbReference type="InterPro" id="IPR050059">
    <property type="entry name" value="ATP_synthase_B_chain"/>
</dbReference>
<dbReference type="NCBIfam" id="NF005607">
    <property type="entry name" value="PRK07353.1"/>
    <property type="match status" value="1"/>
</dbReference>
<dbReference type="PANTHER" id="PTHR33445">
    <property type="entry name" value="ATP SYNTHASE SUBUNIT B', CHLOROPLASTIC"/>
    <property type="match status" value="1"/>
</dbReference>
<dbReference type="PANTHER" id="PTHR33445:SF2">
    <property type="entry name" value="ATP SYNTHASE SUBUNIT B', CHLOROPLASTIC"/>
    <property type="match status" value="1"/>
</dbReference>
<dbReference type="Pfam" id="PF00430">
    <property type="entry name" value="ATP-synt_B"/>
    <property type="match status" value="1"/>
</dbReference>
<protein>
    <recommendedName>
        <fullName evidence="1">ATP synthase subunit b', chloroplastic</fullName>
    </recommendedName>
    <alternativeName>
        <fullName evidence="1">ATP synthase F(0) sector subunit b'</fullName>
    </alternativeName>
    <alternativeName>
        <fullName evidence="1">ATPase subunit II</fullName>
    </alternativeName>
</protein>